<proteinExistence type="inferred from homology"/>
<reference key="1">
    <citation type="journal article" date="2004" name="Proc. Natl. Acad. Sci. U.S.A.">
        <title>Genome sequence of the deep-sea gamma-proteobacterium Idiomarina loihiensis reveals amino acid fermentation as a source of carbon and energy.</title>
        <authorList>
            <person name="Hou S."/>
            <person name="Saw J.H."/>
            <person name="Lee K.S."/>
            <person name="Freitas T.A."/>
            <person name="Belisle C."/>
            <person name="Kawarabayasi Y."/>
            <person name="Donachie S.P."/>
            <person name="Pikina A."/>
            <person name="Galperin M.Y."/>
            <person name="Koonin E.V."/>
            <person name="Makarova K.S."/>
            <person name="Omelchenko M.V."/>
            <person name="Sorokin A."/>
            <person name="Wolf Y.I."/>
            <person name="Li Q.X."/>
            <person name="Keum Y.S."/>
            <person name="Campbell S."/>
            <person name="Denery J."/>
            <person name="Aizawa S."/>
            <person name="Shibata S."/>
            <person name="Malahoff A."/>
            <person name="Alam M."/>
        </authorList>
    </citation>
    <scope>NUCLEOTIDE SEQUENCE [LARGE SCALE GENOMIC DNA]</scope>
    <source>
        <strain>ATCC BAA-735 / DSM 15497 / L2-TR</strain>
    </source>
</reference>
<sequence length="206" mass="23599">MNEWQQRVIALAGMSLSAMAVQKLARSGELYPESISNTLVHSLLQQNPDNIEDIYGGLDNIKPGIQAFIRQAGSNKNKDIEVTRYLIGLIHLSRRLLKQPDILNLLGERITQVKRQKEEFEFENYRIQQSLAGIYRELISPLGQPIRINGNPEFLKRDSNQHHIRTLLLAGIRSAVLWQQVGGKRRHFVFSRKKMLDTAQQLLHVA</sequence>
<protein>
    <recommendedName>
        <fullName evidence="1">High frequency lysogenization protein HflD homolog</fullName>
    </recommendedName>
</protein>
<accession>Q5QZ03</accession>
<gene>
    <name evidence="1" type="primary">hflD</name>
    <name type="ordered locus">IL1311</name>
</gene>
<comment type="subcellular location">
    <subcellularLocation>
        <location>Cytoplasm</location>
    </subcellularLocation>
    <subcellularLocation>
        <location evidence="1">Cell inner membrane</location>
        <topology evidence="1">Peripheral membrane protein</topology>
        <orientation evidence="1">Cytoplasmic side</orientation>
    </subcellularLocation>
</comment>
<comment type="similarity">
    <text evidence="1">Belongs to the HflD family.</text>
</comment>
<dbReference type="EMBL" id="AE017340">
    <property type="protein sequence ID" value="AAV82151.1"/>
    <property type="molecule type" value="Genomic_DNA"/>
</dbReference>
<dbReference type="RefSeq" id="WP_011234557.1">
    <property type="nucleotide sequence ID" value="NC_006512.1"/>
</dbReference>
<dbReference type="SMR" id="Q5QZ03"/>
<dbReference type="STRING" id="283942.IL1311"/>
<dbReference type="GeneID" id="41336487"/>
<dbReference type="KEGG" id="ilo:IL1311"/>
<dbReference type="eggNOG" id="COG2915">
    <property type="taxonomic scope" value="Bacteria"/>
</dbReference>
<dbReference type="HOGENOM" id="CLU_098920_0_0_6"/>
<dbReference type="OrthoDB" id="9788031at2"/>
<dbReference type="Proteomes" id="UP000001171">
    <property type="component" value="Chromosome"/>
</dbReference>
<dbReference type="GO" id="GO:0005737">
    <property type="term" value="C:cytoplasm"/>
    <property type="evidence" value="ECO:0007669"/>
    <property type="project" value="UniProtKB-SubCell"/>
</dbReference>
<dbReference type="GO" id="GO:0005886">
    <property type="term" value="C:plasma membrane"/>
    <property type="evidence" value="ECO:0007669"/>
    <property type="project" value="UniProtKB-SubCell"/>
</dbReference>
<dbReference type="Gene3D" id="1.10.3890.10">
    <property type="entry name" value="HflD-like"/>
    <property type="match status" value="1"/>
</dbReference>
<dbReference type="HAMAP" id="MF_00695">
    <property type="entry name" value="HflD_protein"/>
    <property type="match status" value="1"/>
</dbReference>
<dbReference type="InterPro" id="IPR007451">
    <property type="entry name" value="HflD"/>
</dbReference>
<dbReference type="InterPro" id="IPR035932">
    <property type="entry name" value="HflD-like_sf"/>
</dbReference>
<dbReference type="NCBIfam" id="NF001246">
    <property type="entry name" value="PRK00218.1-2"/>
    <property type="match status" value="1"/>
</dbReference>
<dbReference type="PANTHER" id="PTHR38100">
    <property type="entry name" value="HIGH FREQUENCY LYSOGENIZATION PROTEIN HFLD"/>
    <property type="match status" value="1"/>
</dbReference>
<dbReference type="PANTHER" id="PTHR38100:SF1">
    <property type="entry name" value="HIGH FREQUENCY LYSOGENIZATION PROTEIN HFLD"/>
    <property type="match status" value="1"/>
</dbReference>
<dbReference type="Pfam" id="PF04356">
    <property type="entry name" value="DUF489"/>
    <property type="match status" value="1"/>
</dbReference>
<dbReference type="SUPFAM" id="SSF101322">
    <property type="entry name" value="YcfC-like"/>
    <property type="match status" value="1"/>
</dbReference>
<feature type="chain" id="PRO_0000390640" description="High frequency lysogenization protein HflD homolog">
    <location>
        <begin position="1"/>
        <end position="206"/>
    </location>
</feature>
<evidence type="ECO:0000255" key="1">
    <source>
        <dbReference type="HAMAP-Rule" id="MF_00695"/>
    </source>
</evidence>
<keyword id="KW-0997">Cell inner membrane</keyword>
<keyword id="KW-1003">Cell membrane</keyword>
<keyword id="KW-0963">Cytoplasm</keyword>
<keyword id="KW-0472">Membrane</keyword>
<keyword id="KW-1185">Reference proteome</keyword>
<organism>
    <name type="scientific">Idiomarina loihiensis (strain ATCC BAA-735 / DSM 15497 / L2-TR)</name>
    <dbReference type="NCBI Taxonomy" id="283942"/>
    <lineage>
        <taxon>Bacteria</taxon>
        <taxon>Pseudomonadati</taxon>
        <taxon>Pseudomonadota</taxon>
        <taxon>Gammaproteobacteria</taxon>
        <taxon>Alteromonadales</taxon>
        <taxon>Idiomarinaceae</taxon>
        <taxon>Idiomarina</taxon>
    </lineage>
</organism>
<name>HFLD_IDILO</name>